<comment type="function">
    <text evidence="5">Component of the SWI/SNF complex, an ATP-dependent chromatin remodeling complex, required for the positive and negative regulation of gene expression of a large number of genes. It changes chromatin structure by altering DNA-histone contacts within a nucleosome, leading eventually to a change in nucleosome position, thus facilitating or repressing binding of gene-specific transcription factors.</text>
</comment>
<comment type="subunit">
    <text evidence="5">Component of the SWI/SNF global transcription activator complex composed of at least arp9, arp42, snf5, snf22, snf30, sbf59, sol1, ssr1, ssr2, ssr3, ssr4 and tfg3.</text>
</comment>
<comment type="subcellular location">
    <subcellularLocation>
        <location evidence="1 3">Nucleus</location>
    </subcellularLocation>
</comment>
<comment type="similarity">
    <text evidence="6">Belongs to the SWI1 family.</text>
</comment>
<name>SOL1_SCHPO</name>
<evidence type="ECO:0000255" key="1">
    <source>
        <dbReference type="PROSITE-ProRule" id="PRU00355"/>
    </source>
</evidence>
<evidence type="ECO:0000256" key="2">
    <source>
        <dbReference type="SAM" id="MobiDB-lite"/>
    </source>
</evidence>
<evidence type="ECO:0000269" key="3">
    <source>
    </source>
</evidence>
<evidence type="ECO:0000269" key="4">
    <source>
    </source>
</evidence>
<evidence type="ECO:0000269" key="5">
    <source>
    </source>
</evidence>
<evidence type="ECO:0000305" key="6"/>
<keyword id="KW-0010">Activator</keyword>
<keyword id="KW-0156">Chromatin regulator</keyword>
<keyword id="KW-0238">DNA-binding</keyword>
<keyword id="KW-0539">Nucleus</keyword>
<keyword id="KW-0597">Phosphoprotein</keyword>
<keyword id="KW-1185">Reference proteome</keyword>
<keyword id="KW-0804">Transcription</keyword>
<keyword id="KW-0805">Transcription regulation</keyword>
<sequence length="865" mass="96018">MNNQGFVPASDYPTAVSYPTQGQSYNTQEEQPAYPQRFSTSQGMYAAEYGNANMMNTSENEPNNLAHSQPFRQSPSTQRNLPNQSFDFASNGAWNGSGSVKYSSPMMPSSRIPFQQEKEAAMQQQQQQQQQQQLYQRQMQSREALLSQQIPPNQIGINAHPAVRQTPQPAPSPNTPSGNANQLTPAYAASFDKFMVSLISFMEKRGTPIKSYPQINNTPINLMMLYALVMRAGGSRQVSAHNFWPKISASLGFPSPDAISLLIQYYNSYLLPYEEAWLAAQQQQKSLQQAKANHSANVQSRPKNYPQKPVQTTPEAVHANGSMHGSLHSKSPSPAFTANRFSPAAPTTVSSERNAPPYPSAPTRPTPPTVQTSSSAAPVDSAEPVAYQPIKKPIDPMLGYPLNVAATYRLDESLLRLQMPSIVDLGTVNIQALCMSLQSTLEKEITYAMNVLLILTNDQKWMFPLSECQDVVDALIDVATQCLDNLLSVLPNEDLMEIADKRPSYRQLLYNCCVEISQFSREDFSNSLSENKTKDSINAIDVHNSEQNLLAVFVIFRNLSHFEANQNVLVQNPDFFPLLIRVVKSLNFHATSLLRSSRNTLDLHKDVLIVLCQLSQNFILPNVDVARHVLLFILSFSPFNRKKSKTILNDTLPTSIPSYTPATHPYAGPAINAYAKLLAKDANNKTNFQAIFDNNPKFLDSLFLLLASVVPKFNRHCLKICERRLPLLQQSFFCLAATVSYVKQSEQAANWCNIGEGFFVSMLRLLILLSGHPSLNPPSRVASQYPTTNPFRYVIQSGISTVRRLLSLVEAGNISLSSFPKSETLLAVLLAPTTETSFLKEISNLLDRTGDSDASLENTDDKSGI</sequence>
<proteinExistence type="evidence at protein level"/>
<organism>
    <name type="scientific">Schizosaccharomyces pombe (strain 972 / ATCC 24843)</name>
    <name type="common">Fission yeast</name>
    <dbReference type="NCBI Taxonomy" id="284812"/>
    <lineage>
        <taxon>Eukaryota</taxon>
        <taxon>Fungi</taxon>
        <taxon>Dikarya</taxon>
        <taxon>Ascomycota</taxon>
        <taxon>Taphrinomycotina</taxon>
        <taxon>Schizosaccharomycetes</taxon>
        <taxon>Schizosaccharomycetales</taxon>
        <taxon>Schizosaccharomycetaceae</taxon>
        <taxon>Schizosaccharomyces</taxon>
    </lineage>
</organism>
<feature type="chain" id="PRO_0000318141" description="SWI/SNF chromatin-remodeling complex subunit sol1">
    <location>
        <begin position="1"/>
        <end position="865"/>
    </location>
</feature>
<feature type="domain" description="ARID" evidence="1">
    <location>
        <begin position="188"/>
        <end position="278"/>
    </location>
</feature>
<feature type="region of interest" description="Disordered" evidence="2">
    <location>
        <begin position="1"/>
        <end position="34"/>
    </location>
</feature>
<feature type="region of interest" description="Disordered" evidence="2">
    <location>
        <begin position="54"/>
        <end position="92"/>
    </location>
</feature>
<feature type="region of interest" description="Disordered" evidence="2">
    <location>
        <begin position="116"/>
        <end position="143"/>
    </location>
</feature>
<feature type="region of interest" description="Disordered" evidence="2">
    <location>
        <begin position="163"/>
        <end position="183"/>
    </location>
</feature>
<feature type="region of interest" description="Disordered" evidence="2">
    <location>
        <begin position="288"/>
        <end position="380"/>
    </location>
</feature>
<feature type="compositionally biased region" description="Polar residues" evidence="2">
    <location>
        <begin position="17"/>
        <end position="30"/>
    </location>
</feature>
<feature type="compositionally biased region" description="Low complexity" evidence="2">
    <location>
        <begin position="121"/>
        <end position="139"/>
    </location>
</feature>
<feature type="compositionally biased region" description="Polar residues" evidence="2">
    <location>
        <begin position="328"/>
        <end position="353"/>
    </location>
</feature>
<feature type="compositionally biased region" description="Pro residues" evidence="2">
    <location>
        <begin position="356"/>
        <end position="368"/>
    </location>
</feature>
<feature type="modified residue" description="Phosphoserine" evidence="4">
    <location>
        <position position="852"/>
    </location>
</feature>
<feature type="modified residue" description="Phosphoserine" evidence="4">
    <location>
        <position position="855"/>
    </location>
</feature>
<protein>
    <recommendedName>
        <fullName>SWI/SNF chromatin-remodeling complex subunit sol1</fullName>
    </recommendedName>
    <alternativeName>
        <fullName>SWI/SNF complex subunit sol1</fullName>
    </alternativeName>
    <alternativeName>
        <fullName>Switch one-like protein</fullName>
    </alternativeName>
    <alternativeName>
        <fullName>Transcription regulatory protein sol1</fullName>
    </alternativeName>
</protein>
<accession>O74365</accession>
<dbReference type="EMBL" id="CU329671">
    <property type="protein sequence ID" value="CAA20317.1"/>
    <property type="molecule type" value="Genomic_DNA"/>
</dbReference>
<dbReference type="PIR" id="T40170">
    <property type="entry name" value="T40170"/>
</dbReference>
<dbReference type="RefSeq" id="NP_595529.1">
    <property type="nucleotide sequence ID" value="NM_001021439.2"/>
</dbReference>
<dbReference type="SMR" id="O74365"/>
<dbReference type="BioGRID" id="276848">
    <property type="interactions" value="65"/>
</dbReference>
<dbReference type="ComplexPortal" id="CPX-6362">
    <property type="entry name" value="SWI/SNF chromatin remodelling complex"/>
</dbReference>
<dbReference type="DIP" id="DIP-48378N"/>
<dbReference type="FunCoup" id="O74365">
    <property type="interactions" value="267"/>
</dbReference>
<dbReference type="IntAct" id="O74365">
    <property type="interactions" value="6"/>
</dbReference>
<dbReference type="STRING" id="284812.O74365"/>
<dbReference type="iPTMnet" id="O74365"/>
<dbReference type="PaxDb" id="4896-SPBC30B4.04c.1"/>
<dbReference type="EnsemblFungi" id="SPBC30B4.04c.1">
    <property type="protein sequence ID" value="SPBC30B4.04c.1:pep"/>
    <property type="gene ID" value="SPBC30B4.04c"/>
</dbReference>
<dbReference type="PomBase" id="SPBC30B4.04c">
    <property type="gene designation" value="sol1"/>
</dbReference>
<dbReference type="VEuPathDB" id="FungiDB:SPBC30B4.04c"/>
<dbReference type="eggNOG" id="KOG2744">
    <property type="taxonomic scope" value="Eukaryota"/>
</dbReference>
<dbReference type="HOGENOM" id="CLU_326016_0_0_1"/>
<dbReference type="InParanoid" id="O74365"/>
<dbReference type="OMA" id="INLMMLY"/>
<dbReference type="PhylomeDB" id="O74365"/>
<dbReference type="Reactome" id="R-SPO-3214815">
    <property type="pathway name" value="HDACs deacetylate histones"/>
</dbReference>
<dbReference type="Reactome" id="R-SPO-3214842">
    <property type="pathway name" value="HDMs demethylate histones"/>
</dbReference>
<dbReference type="PRO" id="PR:O74365"/>
<dbReference type="Proteomes" id="UP000002485">
    <property type="component" value="Chromosome II"/>
</dbReference>
<dbReference type="GO" id="GO:0000785">
    <property type="term" value="C:chromatin"/>
    <property type="evidence" value="ECO:0000303"/>
    <property type="project" value="ComplexPortal"/>
</dbReference>
<dbReference type="GO" id="GO:0005634">
    <property type="term" value="C:nucleus"/>
    <property type="evidence" value="ECO:0007005"/>
    <property type="project" value="PomBase"/>
</dbReference>
<dbReference type="GO" id="GO:0016514">
    <property type="term" value="C:SWI/SNF complex"/>
    <property type="evidence" value="ECO:0000314"/>
    <property type="project" value="PomBase"/>
</dbReference>
<dbReference type="GO" id="GO:0000976">
    <property type="term" value="F:transcription cis-regulatory region binding"/>
    <property type="evidence" value="ECO:0000318"/>
    <property type="project" value="GO_Central"/>
</dbReference>
<dbReference type="GO" id="GO:0006338">
    <property type="term" value="P:chromatin remodeling"/>
    <property type="evidence" value="ECO:0000303"/>
    <property type="project" value="ComplexPortal"/>
</dbReference>
<dbReference type="GO" id="GO:0045944">
    <property type="term" value="P:positive regulation of transcription by RNA polymerase II"/>
    <property type="evidence" value="ECO:0000314"/>
    <property type="project" value="PomBase"/>
</dbReference>
<dbReference type="GO" id="GO:0006357">
    <property type="term" value="P:regulation of transcription by RNA polymerase II"/>
    <property type="evidence" value="ECO:0000318"/>
    <property type="project" value="GO_Central"/>
</dbReference>
<dbReference type="GO" id="GO:0045815">
    <property type="term" value="P:transcription initiation-coupled chromatin remodeling"/>
    <property type="evidence" value="ECO:0000305"/>
    <property type="project" value="PomBase"/>
</dbReference>
<dbReference type="CDD" id="cd16871">
    <property type="entry name" value="ARID_Swi1p-like"/>
    <property type="match status" value="1"/>
</dbReference>
<dbReference type="FunFam" id="1.10.150.60:FF:000026">
    <property type="entry name" value="SWI/SNF chromatin-remodeling complex subunit sol1"/>
    <property type="match status" value="1"/>
</dbReference>
<dbReference type="Gene3D" id="1.10.150.60">
    <property type="entry name" value="ARID DNA-binding domain"/>
    <property type="match status" value="1"/>
</dbReference>
<dbReference type="InterPro" id="IPR051232">
    <property type="entry name" value="ARID/SWI1_ChromRemod"/>
</dbReference>
<dbReference type="InterPro" id="IPR001606">
    <property type="entry name" value="ARID_dom"/>
</dbReference>
<dbReference type="InterPro" id="IPR036431">
    <property type="entry name" value="ARID_dom_sf"/>
</dbReference>
<dbReference type="InterPro" id="IPR016024">
    <property type="entry name" value="ARM-type_fold"/>
</dbReference>
<dbReference type="PANTHER" id="PTHR13964:SF27">
    <property type="entry name" value="HAT-TRICK, ISOFORM D"/>
    <property type="match status" value="1"/>
</dbReference>
<dbReference type="PANTHER" id="PTHR13964">
    <property type="entry name" value="RBP-RELATED"/>
    <property type="match status" value="1"/>
</dbReference>
<dbReference type="Pfam" id="PF01388">
    <property type="entry name" value="ARID"/>
    <property type="match status" value="1"/>
</dbReference>
<dbReference type="SMART" id="SM01014">
    <property type="entry name" value="ARID"/>
    <property type="match status" value="1"/>
</dbReference>
<dbReference type="SMART" id="SM00501">
    <property type="entry name" value="BRIGHT"/>
    <property type="match status" value="1"/>
</dbReference>
<dbReference type="SUPFAM" id="SSF46774">
    <property type="entry name" value="ARID-like"/>
    <property type="match status" value="1"/>
</dbReference>
<dbReference type="SUPFAM" id="SSF48371">
    <property type="entry name" value="ARM repeat"/>
    <property type="match status" value="1"/>
</dbReference>
<dbReference type="PROSITE" id="PS51011">
    <property type="entry name" value="ARID"/>
    <property type="match status" value="1"/>
</dbReference>
<reference key="1">
    <citation type="journal article" date="2002" name="Nature">
        <title>The genome sequence of Schizosaccharomyces pombe.</title>
        <authorList>
            <person name="Wood V."/>
            <person name="Gwilliam R."/>
            <person name="Rajandream M.A."/>
            <person name="Lyne M.H."/>
            <person name="Lyne R."/>
            <person name="Stewart A."/>
            <person name="Sgouros J.G."/>
            <person name="Peat N."/>
            <person name="Hayles J."/>
            <person name="Baker S.G."/>
            <person name="Basham D."/>
            <person name="Bowman S."/>
            <person name="Brooks K."/>
            <person name="Brown D."/>
            <person name="Brown S."/>
            <person name="Chillingworth T."/>
            <person name="Churcher C.M."/>
            <person name="Collins M."/>
            <person name="Connor R."/>
            <person name="Cronin A."/>
            <person name="Davis P."/>
            <person name="Feltwell T."/>
            <person name="Fraser A."/>
            <person name="Gentles S."/>
            <person name="Goble A."/>
            <person name="Hamlin N."/>
            <person name="Harris D.E."/>
            <person name="Hidalgo J."/>
            <person name="Hodgson G."/>
            <person name="Holroyd S."/>
            <person name="Hornsby T."/>
            <person name="Howarth S."/>
            <person name="Huckle E.J."/>
            <person name="Hunt S."/>
            <person name="Jagels K."/>
            <person name="James K.D."/>
            <person name="Jones L."/>
            <person name="Jones M."/>
            <person name="Leather S."/>
            <person name="McDonald S."/>
            <person name="McLean J."/>
            <person name="Mooney P."/>
            <person name="Moule S."/>
            <person name="Mungall K.L."/>
            <person name="Murphy L.D."/>
            <person name="Niblett D."/>
            <person name="Odell C."/>
            <person name="Oliver K."/>
            <person name="O'Neil S."/>
            <person name="Pearson D."/>
            <person name="Quail M.A."/>
            <person name="Rabbinowitsch E."/>
            <person name="Rutherford K.M."/>
            <person name="Rutter S."/>
            <person name="Saunders D."/>
            <person name="Seeger K."/>
            <person name="Sharp S."/>
            <person name="Skelton J."/>
            <person name="Simmonds M.N."/>
            <person name="Squares R."/>
            <person name="Squares S."/>
            <person name="Stevens K."/>
            <person name="Taylor K."/>
            <person name="Taylor R.G."/>
            <person name="Tivey A."/>
            <person name="Walsh S.V."/>
            <person name="Warren T."/>
            <person name="Whitehead S."/>
            <person name="Woodward J.R."/>
            <person name="Volckaert G."/>
            <person name="Aert R."/>
            <person name="Robben J."/>
            <person name="Grymonprez B."/>
            <person name="Weltjens I."/>
            <person name="Vanstreels E."/>
            <person name="Rieger M."/>
            <person name="Schaefer M."/>
            <person name="Mueller-Auer S."/>
            <person name="Gabel C."/>
            <person name="Fuchs M."/>
            <person name="Duesterhoeft A."/>
            <person name="Fritzc C."/>
            <person name="Holzer E."/>
            <person name="Moestl D."/>
            <person name="Hilbert H."/>
            <person name="Borzym K."/>
            <person name="Langer I."/>
            <person name="Beck A."/>
            <person name="Lehrach H."/>
            <person name="Reinhardt R."/>
            <person name="Pohl T.M."/>
            <person name="Eger P."/>
            <person name="Zimmermann W."/>
            <person name="Wedler H."/>
            <person name="Wambutt R."/>
            <person name="Purnelle B."/>
            <person name="Goffeau A."/>
            <person name="Cadieu E."/>
            <person name="Dreano S."/>
            <person name="Gloux S."/>
            <person name="Lelaure V."/>
            <person name="Mottier S."/>
            <person name="Galibert F."/>
            <person name="Aves S.J."/>
            <person name="Xiang Z."/>
            <person name="Hunt C."/>
            <person name="Moore K."/>
            <person name="Hurst S.M."/>
            <person name="Lucas M."/>
            <person name="Rochet M."/>
            <person name="Gaillardin C."/>
            <person name="Tallada V.A."/>
            <person name="Garzon A."/>
            <person name="Thode G."/>
            <person name="Daga R.R."/>
            <person name="Cruzado L."/>
            <person name="Jimenez J."/>
            <person name="Sanchez M."/>
            <person name="del Rey F."/>
            <person name="Benito J."/>
            <person name="Dominguez A."/>
            <person name="Revuelta J.L."/>
            <person name="Moreno S."/>
            <person name="Armstrong J."/>
            <person name="Forsburg S.L."/>
            <person name="Cerutti L."/>
            <person name="Lowe T."/>
            <person name="McCombie W.R."/>
            <person name="Paulsen I."/>
            <person name="Potashkin J."/>
            <person name="Shpakovski G.V."/>
            <person name="Ussery D."/>
            <person name="Barrell B.G."/>
            <person name="Nurse P."/>
        </authorList>
    </citation>
    <scope>NUCLEOTIDE SEQUENCE [LARGE SCALE GENOMIC DNA]</scope>
    <source>
        <strain>972 / ATCC 24843</strain>
    </source>
</reference>
<reference key="2">
    <citation type="journal article" date="2006" name="Nat. Biotechnol.">
        <title>ORFeome cloning and global analysis of protein localization in the fission yeast Schizosaccharomyces pombe.</title>
        <authorList>
            <person name="Matsuyama A."/>
            <person name="Arai R."/>
            <person name="Yashiroda Y."/>
            <person name="Shirai A."/>
            <person name="Kamata A."/>
            <person name="Sekido S."/>
            <person name="Kobayashi Y."/>
            <person name="Hashimoto A."/>
            <person name="Hamamoto M."/>
            <person name="Hiraoka Y."/>
            <person name="Horinouchi S."/>
            <person name="Yoshida M."/>
        </authorList>
    </citation>
    <scope>SUBCELLULAR LOCATION [LARGE SCALE ANALYSIS]</scope>
</reference>
<reference key="3">
    <citation type="journal article" date="2008" name="J. Proteome Res.">
        <title>Phosphoproteome analysis of fission yeast.</title>
        <authorList>
            <person name="Wilson-Grady J.T."/>
            <person name="Villen J."/>
            <person name="Gygi S.P."/>
        </authorList>
    </citation>
    <scope>PHOSPHORYLATION [LARGE SCALE ANALYSIS] AT SER-852 AND SER-855</scope>
    <scope>IDENTIFICATION BY MASS SPECTROMETRY</scope>
</reference>
<reference key="4">
    <citation type="journal article" date="2008" name="Nat. Struct. Mol. Biol.">
        <title>Fission yeast SWI/SNF and RSC complexes show compositional and functional differences from budding yeast.</title>
        <authorList>
            <person name="Monahan B.J."/>
            <person name="Villen J."/>
            <person name="Marguerat S."/>
            <person name="Baehler J."/>
            <person name="Gygi S.P."/>
            <person name="Winston F."/>
        </authorList>
    </citation>
    <scope>IDENTIFICATION IN THE SWI/SNF COMPLEX</scope>
    <scope>FUNCTION OF THE SWI/SNF COMPLEX</scope>
    <scope>IDENTIFICATION BY MASS SPECTROMETRY</scope>
</reference>
<gene>
    <name type="primary">sol1</name>
    <name type="ORF">SPBC30B4.04c</name>
</gene>